<gene>
    <name evidence="1" type="primary">acsF</name>
    <name type="ordered locus">PMT_2196</name>
</gene>
<comment type="function">
    <text evidence="1">Catalyzes the formation of the isocyclic ring in chlorophyll biosynthesis. Mediates the cyclase reaction, which results in the formation of divinylprotochlorophyllide (Pchlide) characteristic of all chlorophylls from magnesium-protoporphyrin IX 13-monomethyl ester (MgPMME).</text>
</comment>
<comment type="catalytic activity">
    <reaction evidence="1">
        <text>Mg-protoporphyrin IX 13-monomethyl ester + 3 NADPH + 3 O2 + 2 H(+) = 3,8-divinyl protochlorophyllide a + 3 NADP(+) + 5 H2O</text>
        <dbReference type="Rhea" id="RHEA:33235"/>
        <dbReference type="ChEBI" id="CHEBI:15377"/>
        <dbReference type="ChEBI" id="CHEBI:15378"/>
        <dbReference type="ChEBI" id="CHEBI:15379"/>
        <dbReference type="ChEBI" id="CHEBI:57783"/>
        <dbReference type="ChEBI" id="CHEBI:58349"/>
        <dbReference type="ChEBI" id="CHEBI:58632"/>
        <dbReference type="ChEBI" id="CHEBI:60491"/>
        <dbReference type="EC" id="1.14.13.81"/>
    </reaction>
</comment>
<comment type="cofactor">
    <cofactor evidence="1">
        <name>Fe cation</name>
        <dbReference type="ChEBI" id="CHEBI:24875"/>
    </cofactor>
</comment>
<comment type="pathway">
    <text evidence="1">Porphyrin-containing compound metabolism; chlorophyll biosynthesis (light-independent).</text>
</comment>
<comment type="similarity">
    <text evidence="1">Belongs to the AcsF family.</text>
</comment>
<name>ACSF_PROMM</name>
<feature type="chain" id="PRO_0000217531" description="Magnesium-protoporphyrin IX monomethyl ester [oxidative] cyclase">
    <location>
        <begin position="1"/>
        <end position="349"/>
    </location>
</feature>
<feature type="region of interest" description="Disordered" evidence="2">
    <location>
        <begin position="1"/>
        <end position="23"/>
    </location>
</feature>
<feature type="compositionally biased region" description="Low complexity" evidence="2">
    <location>
        <begin position="1"/>
        <end position="10"/>
    </location>
</feature>
<protein>
    <recommendedName>
        <fullName evidence="1">Magnesium-protoporphyrin IX monomethyl ester [oxidative] cyclase</fullName>
        <shortName evidence="1">Mg-protoporphyrin IX monomethyl ester oxidative cyclase</shortName>
        <ecNumber evidence="1">1.14.13.81</ecNumber>
    </recommendedName>
</protein>
<proteinExistence type="inferred from homology"/>
<reference key="1">
    <citation type="journal article" date="2003" name="Nature">
        <title>Genome divergence in two Prochlorococcus ecotypes reflects oceanic niche differentiation.</title>
        <authorList>
            <person name="Rocap G."/>
            <person name="Larimer F.W."/>
            <person name="Lamerdin J.E."/>
            <person name="Malfatti S."/>
            <person name="Chain P."/>
            <person name="Ahlgren N.A."/>
            <person name="Arellano A."/>
            <person name="Coleman M."/>
            <person name="Hauser L."/>
            <person name="Hess W.R."/>
            <person name="Johnson Z.I."/>
            <person name="Land M.L."/>
            <person name="Lindell D."/>
            <person name="Post A.F."/>
            <person name="Regala W."/>
            <person name="Shah M."/>
            <person name="Shaw S.L."/>
            <person name="Steglich C."/>
            <person name="Sullivan M.B."/>
            <person name="Ting C.S."/>
            <person name="Tolonen A."/>
            <person name="Webb E.A."/>
            <person name="Zinser E.R."/>
            <person name="Chisholm S.W."/>
        </authorList>
    </citation>
    <scope>NUCLEOTIDE SEQUENCE [LARGE SCALE GENOMIC DNA]</scope>
    <source>
        <strain>MIT 9313</strain>
    </source>
</reference>
<keyword id="KW-0149">Chlorophyll biosynthesis</keyword>
<keyword id="KW-0408">Iron</keyword>
<keyword id="KW-0479">Metal-binding</keyword>
<keyword id="KW-0521">NADP</keyword>
<keyword id="KW-0560">Oxidoreductase</keyword>
<keyword id="KW-0602">Photosynthesis</keyword>
<keyword id="KW-1185">Reference proteome</keyword>
<accession>Q7V3Y9</accession>
<evidence type="ECO:0000255" key="1">
    <source>
        <dbReference type="HAMAP-Rule" id="MF_01840"/>
    </source>
</evidence>
<evidence type="ECO:0000256" key="2">
    <source>
        <dbReference type="SAM" id="MobiDB-lite"/>
    </source>
</evidence>
<organism>
    <name type="scientific">Prochlorococcus marinus (strain MIT 9313)</name>
    <dbReference type="NCBI Taxonomy" id="74547"/>
    <lineage>
        <taxon>Bacteria</taxon>
        <taxon>Bacillati</taxon>
        <taxon>Cyanobacteriota</taxon>
        <taxon>Cyanophyceae</taxon>
        <taxon>Synechococcales</taxon>
        <taxon>Prochlorococcaceae</taxon>
        <taxon>Prochlorococcus</taxon>
    </lineage>
</organism>
<sequence length="349" mass="40442">MTATTATAPTMRGGGRNELPPHLDDNLLTPRFYTTEFDKAAKTDLDIARKDFEAMFKEMEADYNLKHFDRKASLERLSELSPEDKAIYESYLVRSVVSEFSGFLLFKEISNRFKKAGRQELGQFFTFLARDEARHAGFLGRALKAEGINVDLPNLGNKRAATFFPLSWVLYSLYLSEKIGYWRYILINRHLNDNPEKVCAPLFDFFEPWCQDENRHGDCINLMMRCWPGMTKGFRGKLLSRFFLWSVFLTHTLTVCERGDFYGLLGIDPVLFDEEVIIQTNNTSRNAFPWVYNFDDGKFLEMRVQILKAFRNWRESSGLAKPVALSKFVSLILRQFALPMQKTNAVRYG</sequence>
<dbReference type="EC" id="1.14.13.81" evidence="1"/>
<dbReference type="EMBL" id="BX548175">
    <property type="protein sequence ID" value="CAE22370.1"/>
    <property type="molecule type" value="Genomic_DNA"/>
</dbReference>
<dbReference type="RefSeq" id="WP_011131560.1">
    <property type="nucleotide sequence ID" value="NC_005071.1"/>
</dbReference>
<dbReference type="SMR" id="Q7V3Y9"/>
<dbReference type="DNASU" id="1728466"/>
<dbReference type="KEGG" id="pmt:PMT_2196"/>
<dbReference type="eggNOG" id="COG1633">
    <property type="taxonomic scope" value="Bacteria"/>
</dbReference>
<dbReference type="HOGENOM" id="CLU_048037_0_0_3"/>
<dbReference type="OrthoDB" id="141643at2"/>
<dbReference type="UniPathway" id="UPA00670"/>
<dbReference type="Proteomes" id="UP000001423">
    <property type="component" value="Chromosome"/>
</dbReference>
<dbReference type="GO" id="GO:0005506">
    <property type="term" value="F:iron ion binding"/>
    <property type="evidence" value="ECO:0007669"/>
    <property type="project" value="UniProtKB-UniRule"/>
</dbReference>
<dbReference type="GO" id="GO:0048529">
    <property type="term" value="F:magnesium-protoporphyrin IX monomethyl ester (oxidative) cyclase activity"/>
    <property type="evidence" value="ECO:0007669"/>
    <property type="project" value="UniProtKB-UniRule"/>
</dbReference>
<dbReference type="GO" id="GO:0036068">
    <property type="term" value="P:light-independent chlorophyll biosynthetic process"/>
    <property type="evidence" value="ECO:0007669"/>
    <property type="project" value="UniProtKB-UniRule"/>
</dbReference>
<dbReference type="GO" id="GO:0015979">
    <property type="term" value="P:photosynthesis"/>
    <property type="evidence" value="ECO:0007669"/>
    <property type="project" value="UniProtKB-UniRule"/>
</dbReference>
<dbReference type="HAMAP" id="MF_01840">
    <property type="entry name" value="AcsF"/>
    <property type="match status" value="1"/>
</dbReference>
<dbReference type="InterPro" id="IPR008434">
    <property type="entry name" value="AcsF"/>
</dbReference>
<dbReference type="InterPro" id="IPR009078">
    <property type="entry name" value="Ferritin-like_SF"/>
</dbReference>
<dbReference type="InterPro" id="IPR003251">
    <property type="entry name" value="Rr_diiron-bd_dom"/>
</dbReference>
<dbReference type="NCBIfam" id="TIGR02029">
    <property type="entry name" value="AcsF"/>
    <property type="match status" value="1"/>
</dbReference>
<dbReference type="NCBIfam" id="NF010172">
    <property type="entry name" value="PRK13654.1"/>
    <property type="match status" value="1"/>
</dbReference>
<dbReference type="PANTHER" id="PTHR31053">
    <property type="entry name" value="MAGNESIUM-PROTOPORPHYRIN IX MONOMETHYL ESTER [OXIDATIVE] CYCLASE, CHLOROPLASTIC"/>
    <property type="match status" value="1"/>
</dbReference>
<dbReference type="PANTHER" id="PTHR31053:SF2">
    <property type="entry name" value="MAGNESIUM-PROTOPORPHYRIN IX MONOMETHYL ESTER [OXIDATIVE] CYCLASE, CHLOROPLASTIC"/>
    <property type="match status" value="1"/>
</dbReference>
<dbReference type="Pfam" id="PF02915">
    <property type="entry name" value="Rubrerythrin"/>
    <property type="match status" value="1"/>
</dbReference>
<dbReference type="SUPFAM" id="SSF47240">
    <property type="entry name" value="Ferritin-like"/>
    <property type="match status" value="1"/>
</dbReference>